<comment type="function">
    <text evidence="1">Responsible for the release of ribosomes from messenger RNA at the termination of protein biosynthesis. May increase the efficiency of translation by recycling ribosomes from one round of translation to another.</text>
</comment>
<comment type="subcellular location">
    <subcellularLocation>
        <location evidence="1">Cytoplasm</location>
    </subcellularLocation>
</comment>
<comment type="similarity">
    <text evidence="1">Belongs to the RRF family.</text>
</comment>
<organism>
    <name type="scientific">Listeria monocytogenes serotype 4a (strain HCC23)</name>
    <dbReference type="NCBI Taxonomy" id="552536"/>
    <lineage>
        <taxon>Bacteria</taxon>
        <taxon>Bacillati</taxon>
        <taxon>Bacillota</taxon>
        <taxon>Bacilli</taxon>
        <taxon>Bacillales</taxon>
        <taxon>Listeriaceae</taxon>
        <taxon>Listeria</taxon>
    </lineage>
</organism>
<name>RRF_LISMH</name>
<dbReference type="EMBL" id="CP001175">
    <property type="protein sequence ID" value="ACK39603.1"/>
    <property type="molecule type" value="Genomic_DNA"/>
</dbReference>
<dbReference type="RefSeq" id="WP_003729925.1">
    <property type="nucleotide sequence ID" value="NC_011660.1"/>
</dbReference>
<dbReference type="SMR" id="B8DG13"/>
<dbReference type="GeneID" id="87012336"/>
<dbReference type="KEGG" id="lmh:LMHCC_1256"/>
<dbReference type="HOGENOM" id="CLU_073981_2_0_9"/>
<dbReference type="GO" id="GO:0005737">
    <property type="term" value="C:cytoplasm"/>
    <property type="evidence" value="ECO:0007669"/>
    <property type="project" value="UniProtKB-SubCell"/>
</dbReference>
<dbReference type="GO" id="GO:0043023">
    <property type="term" value="F:ribosomal large subunit binding"/>
    <property type="evidence" value="ECO:0007669"/>
    <property type="project" value="TreeGrafter"/>
</dbReference>
<dbReference type="GO" id="GO:0006415">
    <property type="term" value="P:translational termination"/>
    <property type="evidence" value="ECO:0007669"/>
    <property type="project" value="UniProtKB-UniRule"/>
</dbReference>
<dbReference type="CDD" id="cd00520">
    <property type="entry name" value="RRF"/>
    <property type="match status" value="1"/>
</dbReference>
<dbReference type="FunFam" id="1.10.132.20:FF:000001">
    <property type="entry name" value="Ribosome-recycling factor"/>
    <property type="match status" value="1"/>
</dbReference>
<dbReference type="FunFam" id="3.30.1360.40:FF:000001">
    <property type="entry name" value="Ribosome-recycling factor"/>
    <property type="match status" value="1"/>
</dbReference>
<dbReference type="Gene3D" id="3.30.1360.40">
    <property type="match status" value="1"/>
</dbReference>
<dbReference type="Gene3D" id="1.10.132.20">
    <property type="entry name" value="Ribosome-recycling factor"/>
    <property type="match status" value="1"/>
</dbReference>
<dbReference type="HAMAP" id="MF_00040">
    <property type="entry name" value="RRF"/>
    <property type="match status" value="1"/>
</dbReference>
<dbReference type="InterPro" id="IPR002661">
    <property type="entry name" value="Ribosome_recyc_fac"/>
</dbReference>
<dbReference type="InterPro" id="IPR023584">
    <property type="entry name" value="Ribosome_recyc_fac_dom"/>
</dbReference>
<dbReference type="InterPro" id="IPR036191">
    <property type="entry name" value="RRF_sf"/>
</dbReference>
<dbReference type="NCBIfam" id="TIGR00496">
    <property type="entry name" value="frr"/>
    <property type="match status" value="1"/>
</dbReference>
<dbReference type="PANTHER" id="PTHR20982:SF3">
    <property type="entry name" value="MITOCHONDRIAL RIBOSOME RECYCLING FACTOR PSEUDO 1"/>
    <property type="match status" value="1"/>
</dbReference>
<dbReference type="PANTHER" id="PTHR20982">
    <property type="entry name" value="RIBOSOME RECYCLING FACTOR"/>
    <property type="match status" value="1"/>
</dbReference>
<dbReference type="Pfam" id="PF01765">
    <property type="entry name" value="RRF"/>
    <property type="match status" value="1"/>
</dbReference>
<dbReference type="SUPFAM" id="SSF55194">
    <property type="entry name" value="Ribosome recycling factor, RRF"/>
    <property type="match status" value="1"/>
</dbReference>
<accession>B8DG13</accession>
<reference key="1">
    <citation type="journal article" date="2011" name="J. Bacteriol.">
        <title>Genome sequence of lineage III Listeria monocytogenes strain HCC23.</title>
        <authorList>
            <person name="Steele C.L."/>
            <person name="Donaldson J.R."/>
            <person name="Paul D."/>
            <person name="Banes M.M."/>
            <person name="Arick T."/>
            <person name="Bridges S.M."/>
            <person name="Lawrence M.L."/>
        </authorList>
    </citation>
    <scope>NUCLEOTIDE SEQUENCE [LARGE SCALE GENOMIC DNA]</scope>
    <source>
        <strain>HCC23</strain>
    </source>
</reference>
<feature type="chain" id="PRO_1000194936" description="Ribosome-recycling factor">
    <location>
        <begin position="1"/>
        <end position="185"/>
    </location>
</feature>
<sequence>MSKEVLSKSKEKMEKAEQALTRQLGTIRAGRANASLLDRLSVDYYGAATPVNQMASISVPEARMLLITPYDKTILGEIEKAILKSDLGLTPNNDGSVLRLSIPQLTEERRKELVKEVKKEAEEAKVAVRNIRREANEELKKLEKSGDITEDDLRSYGEDVQKLTDESIKNIDSITKDKEAEILEV</sequence>
<keyword id="KW-0963">Cytoplasm</keyword>
<keyword id="KW-0648">Protein biosynthesis</keyword>
<protein>
    <recommendedName>
        <fullName evidence="1">Ribosome-recycling factor</fullName>
        <shortName evidence="1">RRF</shortName>
    </recommendedName>
    <alternativeName>
        <fullName evidence="1">Ribosome-releasing factor</fullName>
    </alternativeName>
</protein>
<proteinExistence type="inferred from homology"/>
<evidence type="ECO:0000255" key="1">
    <source>
        <dbReference type="HAMAP-Rule" id="MF_00040"/>
    </source>
</evidence>
<gene>
    <name evidence="1" type="primary">frr</name>
    <name type="ordered locus">LMHCC_1256</name>
</gene>